<comment type="function">
    <text evidence="1">F(1)F(0) ATP synthase produces ATP from ADP in the presence of a proton or sodium gradient. F-type ATPases consist of two structural domains, F(1) containing the extramembraneous catalytic core and F(0) containing the membrane proton channel, linked together by a central stalk and a peripheral stalk. During catalysis, ATP synthesis in the catalytic domain of F(1) is coupled via a rotary mechanism of the central stalk subunits to proton translocation.</text>
</comment>
<comment type="function">
    <text evidence="1">This protein is part of the stalk that links CF(0) to CF(1). It either transmits conformational changes from CF(0) to CF(1) or is implicated in proton conduction.</text>
</comment>
<comment type="subunit">
    <text evidence="1">F-type ATPases have 2 components, F(1) - the catalytic core - and F(0) - the membrane proton channel. F(1) has five subunits: alpha(3), beta(3), gamma(1), delta(1), epsilon(1). CF(0) has four main subunits: a(1), b(1), b'(1) and c(10-14). The alpha and beta chains form an alternating ring which encloses part of the gamma chain. F(1) is attached to F(0) by a central stalk formed by the gamma and epsilon chains, while a peripheral stalk is formed by the delta, b and b' chains.</text>
</comment>
<comment type="subcellular location">
    <subcellularLocation>
        <location evidence="1">Cell inner membrane</location>
        <topology evidence="1">Peripheral membrane protein</topology>
    </subcellularLocation>
</comment>
<comment type="similarity">
    <text evidence="1">Belongs to the ATPase delta chain family.</text>
</comment>
<accession>Q13DP5</accession>
<keyword id="KW-0066">ATP synthesis</keyword>
<keyword id="KW-0997">Cell inner membrane</keyword>
<keyword id="KW-1003">Cell membrane</keyword>
<keyword id="KW-0139">CF(1)</keyword>
<keyword id="KW-0375">Hydrogen ion transport</keyword>
<keyword id="KW-0406">Ion transport</keyword>
<keyword id="KW-0472">Membrane</keyword>
<keyword id="KW-0813">Transport</keyword>
<sequence>MASEDPSVSGVSGRYATALFELARDEKVIDAVKADLDKFSAMLVESPELLRLVRSPVFGAEAQTKALGAVLDKAGIAGISANFLKLLAANRRLFVVADVIGAYRALVARFKGEATADVTVAETLSDKNLEALKLALKSVTGKDVTLNINVDPAIIGGLVVKLGSRMVDSSIRTKLNSIKHAMKEAG</sequence>
<proteinExistence type="inferred from homology"/>
<gene>
    <name evidence="1" type="primary">atpH</name>
    <name type="ordered locus">RPD_0556</name>
</gene>
<evidence type="ECO:0000255" key="1">
    <source>
        <dbReference type="HAMAP-Rule" id="MF_01416"/>
    </source>
</evidence>
<name>ATPD_RHOPS</name>
<organism>
    <name type="scientific">Rhodopseudomonas palustris (strain BisB5)</name>
    <dbReference type="NCBI Taxonomy" id="316057"/>
    <lineage>
        <taxon>Bacteria</taxon>
        <taxon>Pseudomonadati</taxon>
        <taxon>Pseudomonadota</taxon>
        <taxon>Alphaproteobacteria</taxon>
        <taxon>Hyphomicrobiales</taxon>
        <taxon>Nitrobacteraceae</taxon>
        <taxon>Rhodopseudomonas</taxon>
    </lineage>
</organism>
<feature type="chain" id="PRO_0000371097" description="ATP synthase subunit delta">
    <location>
        <begin position="1"/>
        <end position="186"/>
    </location>
</feature>
<protein>
    <recommendedName>
        <fullName evidence="1">ATP synthase subunit delta</fullName>
    </recommendedName>
    <alternativeName>
        <fullName evidence="1">ATP synthase F(1) sector subunit delta</fullName>
    </alternativeName>
    <alternativeName>
        <fullName evidence="1">F-type ATPase subunit delta</fullName>
        <shortName evidence="1">F-ATPase subunit delta</shortName>
    </alternativeName>
</protein>
<dbReference type="EMBL" id="CP000283">
    <property type="protein sequence ID" value="ABE37794.1"/>
    <property type="molecule type" value="Genomic_DNA"/>
</dbReference>
<dbReference type="SMR" id="Q13DP5"/>
<dbReference type="STRING" id="316057.RPD_0556"/>
<dbReference type="KEGG" id="rpd:RPD_0556"/>
<dbReference type="eggNOG" id="COG0712">
    <property type="taxonomic scope" value="Bacteria"/>
</dbReference>
<dbReference type="HOGENOM" id="CLU_085114_0_1_5"/>
<dbReference type="BioCyc" id="RPAL316057:RPD_RS02855-MONOMER"/>
<dbReference type="Proteomes" id="UP000001818">
    <property type="component" value="Chromosome"/>
</dbReference>
<dbReference type="GO" id="GO:0005886">
    <property type="term" value="C:plasma membrane"/>
    <property type="evidence" value="ECO:0007669"/>
    <property type="project" value="UniProtKB-SubCell"/>
</dbReference>
<dbReference type="GO" id="GO:0045259">
    <property type="term" value="C:proton-transporting ATP synthase complex"/>
    <property type="evidence" value="ECO:0007669"/>
    <property type="project" value="UniProtKB-KW"/>
</dbReference>
<dbReference type="GO" id="GO:0046933">
    <property type="term" value="F:proton-transporting ATP synthase activity, rotational mechanism"/>
    <property type="evidence" value="ECO:0007669"/>
    <property type="project" value="UniProtKB-UniRule"/>
</dbReference>
<dbReference type="Gene3D" id="1.10.520.20">
    <property type="entry name" value="N-terminal domain of the delta subunit of the F1F0-ATP synthase"/>
    <property type="match status" value="1"/>
</dbReference>
<dbReference type="HAMAP" id="MF_01416">
    <property type="entry name" value="ATP_synth_delta_bact"/>
    <property type="match status" value="1"/>
</dbReference>
<dbReference type="InterPro" id="IPR026015">
    <property type="entry name" value="ATP_synth_OSCP/delta_N_sf"/>
</dbReference>
<dbReference type="InterPro" id="IPR020781">
    <property type="entry name" value="ATPase_OSCP/d_CS"/>
</dbReference>
<dbReference type="InterPro" id="IPR000711">
    <property type="entry name" value="ATPase_OSCP/dsu"/>
</dbReference>
<dbReference type="NCBIfam" id="TIGR01145">
    <property type="entry name" value="ATP_synt_delta"/>
    <property type="match status" value="1"/>
</dbReference>
<dbReference type="NCBIfam" id="NF004406">
    <property type="entry name" value="PRK05758.3-2"/>
    <property type="match status" value="1"/>
</dbReference>
<dbReference type="PANTHER" id="PTHR11910">
    <property type="entry name" value="ATP SYNTHASE DELTA CHAIN"/>
    <property type="match status" value="1"/>
</dbReference>
<dbReference type="Pfam" id="PF00213">
    <property type="entry name" value="OSCP"/>
    <property type="match status" value="1"/>
</dbReference>
<dbReference type="PRINTS" id="PR00125">
    <property type="entry name" value="ATPASEDELTA"/>
</dbReference>
<dbReference type="SUPFAM" id="SSF47928">
    <property type="entry name" value="N-terminal domain of the delta subunit of the F1F0-ATP synthase"/>
    <property type="match status" value="1"/>
</dbReference>
<dbReference type="PROSITE" id="PS00389">
    <property type="entry name" value="ATPASE_DELTA"/>
    <property type="match status" value="1"/>
</dbReference>
<reference key="1">
    <citation type="submission" date="2006-03" db="EMBL/GenBank/DDBJ databases">
        <title>Complete sequence of Rhodopseudomonas palustris BisB5.</title>
        <authorList>
            <consortium name="US DOE Joint Genome Institute"/>
            <person name="Copeland A."/>
            <person name="Lucas S."/>
            <person name="Lapidus A."/>
            <person name="Barry K."/>
            <person name="Detter J.C."/>
            <person name="Glavina del Rio T."/>
            <person name="Hammon N."/>
            <person name="Israni S."/>
            <person name="Dalin E."/>
            <person name="Tice H."/>
            <person name="Pitluck S."/>
            <person name="Chain P."/>
            <person name="Malfatti S."/>
            <person name="Shin M."/>
            <person name="Vergez L."/>
            <person name="Schmutz J."/>
            <person name="Larimer F."/>
            <person name="Land M."/>
            <person name="Hauser L."/>
            <person name="Pelletier D.A."/>
            <person name="Kyrpides N."/>
            <person name="Lykidis A."/>
            <person name="Oda Y."/>
            <person name="Harwood C.S."/>
            <person name="Richardson P."/>
        </authorList>
    </citation>
    <scope>NUCLEOTIDE SEQUENCE [LARGE SCALE GENOMIC DNA]</scope>
    <source>
        <strain>BisB5</strain>
    </source>
</reference>